<name>SYC_BLOFL</name>
<keyword id="KW-0030">Aminoacyl-tRNA synthetase</keyword>
<keyword id="KW-0067">ATP-binding</keyword>
<keyword id="KW-0963">Cytoplasm</keyword>
<keyword id="KW-0436">Ligase</keyword>
<keyword id="KW-0479">Metal-binding</keyword>
<keyword id="KW-0547">Nucleotide-binding</keyword>
<keyword id="KW-0648">Protein biosynthesis</keyword>
<keyword id="KW-1185">Reference proteome</keyword>
<keyword id="KW-0862">Zinc</keyword>
<dbReference type="EC" id="6.1.1.16" evidence="1"/>
<dbReference type="EMBL" id="BX248583">
    <property type="protein sequence ID" value="CAD83375.1"/>
    <property type="molecule type" value="Genomic_DNA"/>
</dbReference>
<dbReference type="SMR" id="Q7VRB4"/>
<dbReference type="STRING" id="203907.Bfl304"/>
<dbReference type="KEGG" id="bfl:Bfl304"/>
<dbReference type="eggNOG" id="COG0215">
    <property type="taxonomic scope" value="Bacteria"/>
</dbReference>
<dbReference type="HOGENOM" id="CLU_013528_0_1_6"/>
<dbReference type="OrthoDB" id="9815130at2"/>
<dbReference type="Proteomes" id="UP000002192">
    <property type="component" value="Chromosome"/>
</dbReference>
<dbReference type="GO" id="GO:0005829">
    <property type="term" value="C:cytosol"/>
    <property type="evidence" value="ECO:0007669"/>
    <property type="project" value="TreeGrafter"/>
</dbReference>
<dbReference type="GO" id="GO:0005524">
    <property type="term" value="F:ATP binding"/>
    <property type="evidence" value="ECO:0007669"/>
    <property type="project" value="UniProtKB-UniRule"/>
</dbReference>
<dbReference type="GO" id="GO:0004817">
    <property type="term" value="F:cysteine-tRNA ligase activity"/>
    <property type="evidence" value="ECO:0007669"/>
    <property type="project" value="UniProtKB-UniRule"/>
</dbReference>
<dbReference type="GO" id="GO:0008270">
    <property type="term" value="F:zinc ion binding"/>
    <property type="evidence" value="ECO:0007669"/>
    <property type="project" value="UniProtKB-UniRule"/>
</dbReference>
<dbReference type="GO" id="GO:0006423">
    <property type="term" value="P:cysteinyl-tRNA aminoacylation"/>
    <property type="evidence" value="ECO:0007669"/>
    <property type="project" value="UniProtKB-UniRule"/>
</dbReference>
<dbReference type="CDD" id="cd07963">
    <property type="entry name" value="Anticodon_Ia_Cys"/>
    <property type="match status" value="1"/>
</dbReference>
<dbReference type="CDD" id="cd00672">
    <property type="entry name" value="CysRS_core"/>
    <property type="match status" value="1"/>
</dbReference>
<dbReference type="FunFam" id="3.40.50.620:FF:000009">
    <property type="entry name" value="Cysteine--tRNA ligase"/>
    <property type="match status" value="1"/>
</dbReference>
<dbReference type="Gene3D" id="1.20.120.1910">
    <property type="entry name" value="Cysteine-tRNA ligase, C-terminal anti-codon recognition domain"/>
    <property type="match status" value="1"/>
</dbReference>
<dbReference type="Gene3D" id="3.40.50.620">
    <property type="entry name" value="HUPs"/>
    <property type="match status" value="1"/>
</dbReference>
<dbReference type="HAMAP" id="MF_00041">
    <property type="entry name" value="Cys_tRNA_synth"/>
    <property type="match status" value="1"/>
</dbReference>
<dbReference type="InterPro" id="IPR015803">
    <property type="entry name" value="Cys-tRNA-ligase"/>
</dbReference>
<dbReference type="InterPro" id="IPR015273">
    <property type="entry name" value="Cys-tRNA-synt_Ia_DALR"/>
</dbReference>
<dbReference type="InterPro" id="IPR024909">
    <property type="entry name" value="Cys-tRNA/MSH_ligase"/>
</dbReference>
<dbReference type="InterPro" id="IPR014729">
    <property type="entry name" value="Rossmann-like_a/b/a_fold"/>
</dbReference>
<dbReference type="InterPro" id="IPR032678">
    <property type="entry name" value="tRNA-synt_1_cat_dom"/>
</dbReference>
<dbReference type="InterPro" id="IPR009080">
    <property type="entry name" value="tRNAsynth_Ia_anticodon-bd"/>
</dbReference>
<dbReference type="NCBIfam" id="TIGR00435">
    <property type="entry name" value="cysS"/>
    <property type="match status" value="1"/>
</dbReference>
<dbReference type="PANTHER" id="PTHR10890:SF3">
    <property type="entry name" value="CYSTEINE--TRNA LIGASE, CYTOPLASMIC"/>
    <property type="match status" value="1"/>
</dbReference>
<dbReference type="PANTHER" id="PTHR10890">
    <property type="entry name" value="CYSTEINYL-TRNA SYNTHETASE"/>
    <property type="match status" value="1"/>
</dbReference>
<dbReference type="Pfam" id="PF09190">
    <property type="entry name" value="DALR_2"/>
    <property type="match status" value="1"/>
</dbReference>
<dbReference type="Pfam" id="PF01406">
    <property type="entry name" value="tRNA-synt_1e"/>
    <property type="match status" value="1"/>
</dbReference>
<dbReference type="PRINTS" id="PR00983">
    <property type="entry name" value="TRNASYNTHCYS"/>
</dbReference>
<dbReference type="SMART" id="SM00840">
    <property type="entry name" value="DALR_2"/>
    <property type="match status" value="1"/>
</dbReference>
<dbReference type="SUPFAM" id="SSF47323">
    <property type="entry name" value="Anticodon-binding domain of a subclass of class I aminoacyl-tRNA synthetases"/>
    <property type="match status" value="1"/>
</dbReference>
<dbReference type="SUPFAM" id="SSF52374">
    <property type="entry name" value="Nucleotidylyl transferase"/>
    <property type="match status" value="1"/>
</dbReference>
<accession>Q7VRB4</accession>
<organism>
    <name type="scientific">Blochmanniella floridana</name>
    <dbReference type="NCBI Taxonomy" id="203907"/>
    <lineage>
        <taxon>Bacteria</taxon>
        <taxon>Pseudomonadati</taxon>
        <taxon>Pseudomonadota</taxon>
        <taxon>Gammaproteobacteria</taxon>
        <taxon>Enterobacterales</taxon>
        <taxon>Enterobacteriaceae</taxon>
        <taxon>ant endosymbionts</taxon>
        <taxon>Candidatus Blochmanniella</taxon>
    </lineage>
</organism>
<feature type="chain" id="PRO_0000159373" description="Cysteine--tRNA ligase">
    <location>
        <begin position="1"/>
        <end position="474"/>
    </location>
</feature>
<feature type="short sequence motif" description="'HIGH' region">
    <location>
        <begin position="30"/>
        <end position="40"/>
    </location>
</feature>
<feature type="short sequence motif" description="'KMSKS' region">
    <location>
        <begin position="269"/>
        <end position="273"/>
    </location>
</feature>
<feature type="binding site" evidence="1">
    <location>
        <position position="28"/>
    </location>
    <ligand>
        <name>Zn(2+)</name>
        <dbReference type="ChEBI" id="CHEBI:29105"/>
    </ligand>
</feature>
<feature type="binding site" evidence="1">
    <location>
        <position position="209"/>
    </location>
    <ligand>
        <name>Zn(2+)</name>
        <dbReference type="ChEBI" id="CHEBI:29105"/>
    </ligand>
</feature>
<feature type="binding site" evidence="1">
    <location>
        <position position="234"/>
    </location>
    <ligand>
        <name>Zn(2+)</name>
        <dbReference type="ChEBI" id="CHEBI:29105"/>
    </ligand>
</feature>
<feature type="binding site" evidence="1">
    <location>
        <position position="238"/>
    </location>
    <ligand>
        <name>Zn(2+)</name>
        <dbReference type="ChEBI" id="CHEBI:29105"/>
    </ligand>
</feature>
<feature type="binding site" evidence="1">
    <location>
        <position position="272"/>
    </location>
    <ligand>
        <name>ATP</name>
        <dbReference type="ChEBI" id="CHEBI:30616"/>
    </ligand>
</feature>
<reference key="1">
    <citation type="journal article" date="2003" name="Proc. Natl. Acad. Sci. U.S.A.">
        <title>The genome sequence of Blochmannia floridanus: comparative analysis of reduced genomes.</title>
        <authorList>
            <person name="Gil R."/>
            <person name="Silva F.J."/>
            <person name="Zientz E."/>
            <person name="Delmotte F."/>
            <person name="Gonzalez-Candelas F."/>
            <person name="Latorre A."/>
            <person name="Rausell C."/>
            <person name="Kamerbeek J."/>
            <person name="Gadau J."/>
            <person name="Hoelldobler B."/>
            <person name="van Ham R.C.H.J."/>
            <person name="Gross R."/>
            <person name="Moya A."/>
        </authorList>
    </citation>
    <scope>NUCLEOTIDE SEQUENCE [LARGE SCALE GENOMIC DNA]</scope>
</reference>
<comment type="catalytic activity">
    <reaction evidence="1">
        <text>tRNA(Cys) + L-cysteine + ATP = L-cysteinyl-tRNA(Cys) + AMP + diphosphate</text>
        <dbReference type="Rhea" id="RHEA:17773"/>
        <dbReference type="Rhea" id="RHEA-COMP:9661"/>
        <dbReference type="Rhea" id="RHEA-COMP:9679"/>
        <dbReference type="ChEBI" id="CHEBI:30616"/>
        <dbReference type="ChEBI" id="CHEBI:33019"/>
        <dbReference type="ChEBI" id="CHEBI:35235"/>
        <dbReference type="ChEBI" id="CHEBI:78442"/>
        <dbReference type="ChEBI" id="CHEBI:78517"/>
        <dbReference type="ChEBI" id="CHEBI:456215"/>
        <dbReference type="EC" id="6.1.1.16"/>
    </reaction>
</comment>
<comment type="cofactor">
    <cofactor evidence="1">
        <name>Zn(2+)</name>
        <dbReference type="ChEBI" id="CHEBI:29105"/>
    </cofactor>
    <text evidence="1">Binds 1 zinc ion per subunit.</text>
</comment>
<comment type="subunit">
    <text evidence="1">Monomer.</text>
</comment>
<comment type="subcellular location">
    <subcellularLocation>
        <location evidence="1">Cytoplasm</location>
    </subcellularLocation>
</comment>
<comment type="similarity">
    <text evidence="1">Belongs to the class-I aminoacyl-tRNA synthetase family.</text>
</comment>
<proteinExistence type="inferred from homology"/>
<sequence length="474" mass="55709">MLKIFNTLTKKKEIFKSIKCGEIKIYVCGITVYDLCHLGHARTFVIFDTILRYLKHYGYQVKYVRNITDIDDKIIQRAIKNNETTDHLASRMIQEMYLDLDILNILRPNYEPKVTDHIELIINFIRLLIERNHAYVTSDGNVMFSIQTVYNYGVLSCHKKNQTFTQRNIRNKMIKKDPVDFVLWKTAKSGEPYWISPWGKGRPGWHIECSAISHAFLGKHIDIHGGGSDLVFPHHENEIAQSTCAHHITVDSYVNTWIHTGMLTFNDEKMSKSLNNFFTIREIIQKYDPETIRYFLLSAHYRKPLRYSDNNIKNARLSLKHLYSALHGINFNPIVQLYDNNSEKYFISKFNNKMNNDFNFPEAYSILFEMAHALNIAKIKDHVRAKSLAAHLKYLANILGILYQDPEIYLGYNTCIKNNKQSLTVEKIRELIYMRENARKNKEWQLSDKIRKRLTEIGIILEDKPTGKTIWRYN</sequence>
<gene>
    <name evidence="1" type="primary">cysS</name>
    <name type="ordered locus">Bfl304</name>
</gene>
<evidence type="ECO:0000255" key="1">
    <source>
        <dbReference type="HAMAP-Rule" id="MF_00041"/>
    </source>
</evidence>
<protein>
    <recommendedName>
        <fullName evidence="1">Cysteine--tRNA ligase</fullName>
        <ecNumber evidence="1">6.1.1.16</ecNumber>
    </recommendedName>
    <alternativeName>
        <fullName evidence="1">Cysteinyl-tRNA synthetase</fullName>
        <shortName evidence="1">CysRS</shortName>
    </alternativeName>
</protein>